<keyword id="KW-0021">Allosteric enzyme</keyword>
<keyword id="KW-0963">Cytoplasm</keyword>
<keyword id="KW-0520">NAD</keyword>
<keyword id="KW-0560">Oxidoreductase</keyword>
<keyword id="KW-0597">Phosphoprotein</keyword>
<keyword id="KW-1185">Reference proteome</keyword>
<dbReference type="EC" id="1.1.1.27" evidence="1"/>
<dbReference type="EMBL" id="BA000045">
    <property type="protein sequence ID" value="BAC91265.1"/>
    <property type="molecule type" value="Genomic_DNA"/>
</dbReference>
<dbReference type="RefSeq" id="NP_926270.1">
    <property type="nucleotide sequence ID" value="NC_005125.1"/>
</dbReference>
<dbReference type="SMR" id="Q7NG49"/>
<dbReference type="STRING" id="251221.gene:10760835"/>
<dbReference type="EnsemblBacteria" id="BAC91265">
    <property type="protein sequence ID" value="BAC91265"/>
    <property type="gene ID" value="BAC91265"/>
</dbReference>
<dbReference type="KEGG" id="gvi:gll3324"/>
<dbReference type="PATRIC" id="fig|251221.4.peg.3355"/>
<dbReference type="eggNOG" id="COG0039">
    <property type="taxonomic scope" value="Bacteria"/>
</dbReference>
<dbReference type="HOGENOM" id="CLU_045401_1_1_3"/>
<dbReference type="InParanoid" id="Q7NG49"/>
<dbReference type="OrthoDB" id="9802969at2"/>
<dbReference type="PhylomeDB" id="Q7NG49"/>
<dbReference type="UniPathway" id="UPA00554">
    <property type="reaction ID" value="UER00611"/>
</dbReference>
<dbReference type="Proteomes" id="UP000000557">
    <property type="component" value="Chromosome"/>
</dbReference>
<dbReference type="GO" id="GO:0005737">
    <property type="term" value="C:cytoplasm"/>
    <property type="evidence" value="ECO:0007669"/>
    <property type="project" value="UniProtKB-SubCell"/>
</dbReference>
<dbReference type="GO" id="GO:0004459">
    <property type="term" value="F:L-lactate dehydrogenase activity"/>
    <property type="evidence" value="ECO:0000318"/>
    <property type="project" value="GO_Central"/>
</dbReference>
<dbReference type="GO" id="GO:0006096">
    <property type="term" value="P:glycolytic process"/>
    <property type="evidence" value="ECO:0007669"/>
    <property type="project" value="UniProtKB-UniRule"/>
</dbReference>
<dbReference type="GO" id="GO:0006089">
    <property type="term" value="P:lactate metabolic process"/>
    <property type="evidence" value="ECO:0000318"/>
    <property type="project" value="GO_Central"/>
</dbReference>
<dbReference type="GO" id="GO:0006090">
    <property type="term" value="P:pyruvate metabolic process"/>
    <property type="evidence" value="ECO:0000318"/>
    <property type="project" value="GO_Central"/>
</dbReference>
<dbReference type="CDD" id="cd05292">
    <property type="entry name" value="LDH_2"/>
    <property type="match status" value="1"/>
</dbReference>
<dbReference type="FunFam" id="3.40.50.720:FF:000018">
    <property type="entry name" value="Malate dehydrogenase"/>
    <property type="match status" value="1"/>
</dbReference>
<dbReference type="Gene3D" id="3.90.110.10">
    <property type="entry name" value="Lactate dehydrogenase/glycoside hydrolase, family 4, C-terminal"/>
    <property type="match status" value="1"/>
</dbReference>
<dbReference type="Gene3D" id="3.40.50.720">
    <property type="entry name" value="NAD(P)-binding Rossmann-like Domain"/>
    <property type="match status" value="1"/>
</dbReference>
<dbReference type="HAMAP" id="MF_00488">
    <property type="entry name" value="Lactate_dehydrog"/>
    <property type="match status" value="1"/>
</dbReference>
<dbReference type="InterPro" id="IPR001557">
    <property type="entry name" value="L-lactate/malate_DH"/>
</dbReference>
<dbReference type="InterPro" id="IPR011304">
    <property type="entry name" value="L-lactate_DH"/>
</dbReference>
<dbReference type="InterPro" id="IPR018177">
    <property type="entry name" value="L-lactate_DH_AS"/>
</dbReference>
<dbReference type="InterPro" id="IPR022383">
    <property type="entry name" value="Lactate/malate_DH_C"/>
</dbReference>
<dbReference type="InterPro" id="IPR001236">
    <property type="entry name" value="Lactate/malate_DH_N"/>
</dbReference>
<dbReference type="InterPro" id="IPR015955">
    <property type="entry name" value="Lactate_DH/Glyco_Ohase_4_C"/>
</dbReference>
<dbReference type="InterPro" id="IPR036291">
    <property type="entry name" value="NAD(P)-bd_dom_sf"/>
</dbReference>
<dbReference type="NCBIfam" id="TIGR01771">
    <property type="entry name" value="L-LDH-NAD"/>
    <property type="match status" value="1"/>
</dbReference>
<dbReference type="NCBIfam" id="NF000824">
    <property type="entry name" value="PRK00066.1"/>
    <property type="match status" value="1"/>
</dbReference>
<dbReference type="PANTHER" id="PTHR43128">
    <property type="entry name" value="L-2-HYDROXYCARBOXYLATE DEHYDROGENASE (NAD(P)(+))"/>
    <property type="match status" value="1"/>
</dbReference>
<dbReference type="PANTHER" id="PTHR43128:SF16">
    <property type="entry name" value="L-LACTATE DEHYDROGENASE"/>
    <property type="match status" value="1"/>
</dbReference>
<dbReference type="Pfam" id="PF02866">
    <property type="entry name" value="Ldh_1_C"/>
    <property type="match status" value="1"/>
</dbReference>
<dbReference type="Pfam" id="PF00056">
    <property type="entry name" value="Ldh_1_N"/>
    <property type="match status" value="1"/>
</dbReference>
<dbReference type="PIRSF" id="PIRSF000102">
    <property type="entry name" value="Lac_mal_DH"/>
    <property type="match status" value="1"/>
</dbReference>
<dbReference type="PRINTS" id="PR00086">
    <property type="entry name" value="LLDHDRGNASE"/>
</dbReference>
<dbReference type="SUPFAM" id="SSF56327">
    <property type="entry name" value="LDH C-terminal domain-like"/>
    <property type="match status" value="1"/>
</dbReference>
<dbReference type="SUPFAM" id="SSF51735">
    <property type="entry name" value="NAD(P)-binding Rossmann-fold domains"/>
    <property type="match status" value="1"/>
</dbReference>
<dbReference type="PROSITE" id="PS00064">
    <property type="entry name" value="L_LDH"/>
    <property type="match status" value="1"/>
</dbReference>
<gene>
    <name evidence="1" type="primary">ldh</name>
    <name type="ordered locus">gll3324</name>
</gene>
<evidence type="ECO:0000255" key="1">
    <source>
        <dbReference type="HAMAP-Rule" id="MF_00488"/>
    </source>
</evidence>
<accession>Q7NG49</accession>
<feature type="chain" id="PRO_0000168346" description="L-lactate dehydrogenase">
    <location>
        <begin position="1"/>
        <end position="330"/>
    </location>
</feature>
<feature type="active site" description="Proton acceptor" evidence="1">
    <location>
        <position position="192"/>
    </location>
</feature>
<feature type="binding site" evidence="1">
    <location>
        <position position="31"/>
    </location>
    <ligand>
        <name>NAD(+)</name>
        <dbReference type="ChEBI" id="CHEBI:57540"/>
    </ligand>
</feature>
<feature type="binding site" evidence="1">
    <location>
        <position position="52"/>
    </location>
    <ligand>
        <name>NAD(+)</name>
        <dbReference type="ChEBI" id="CHEBI:57540"/>
    </ligand>
</feature>
<feature type="binding site" evidence="1">
    <location>
        <position position="57"/>
    </location>
    <ligand>
        <name>NAD(+)</name>
        <dbReference type="ChEBI" id="CHEBI:57540"/>
    </ligand>
</feature>
<feature type="binding site" evidence="1">
    <location>
        <begin position="96"/>
        <end position="97"/>
    </location>
    <ligand>
        <name>NAD(+)</name>
        <dbReference type="ChEBI" id="CHEBI:57540"/>
    </ligand>
</feature>
<feature type="binding site" evidence="1">
    <location>
        <position position="99"/>
    </location>
    <ligand>
        <name>substrate</name>
    </ligand>
</feature>
<feature type="binding site" evidence="1">
    <location>
        <position position="105"/>
    </location>
    <ligand>
        <name>substrate</name>
    </ligand>
</feature>
<feature type="binding site" evidence="1">
    <location>
        <begin position="135"/>
        <end position="137"/>
    </location>
    <ligand>
        <name>NAD(+)</name>
        <dbReference type="ChEBI" id="CHEBI:57540"/>
    </ligand>
</feature>
<feature type="binding site" evidence="1">
    <location>
        <begin position="137"/>
        <end position="140"/>
    </location>
    <ligand>
        <name>substrate</name>
    </ligand>
</feature>
<feature type="binding site" evidence="1">
    <location>
        <position position="160"/>
    </location>
    <ligand>
        <name>NAD(+)</name>
        <dbReference type="ChEBI" id="CHEBI:57540"/>
    </ligand>
</feature>
<feature type="binding site" evidence="1">
    <location>
        <begin position="165"/>
        <end position="168"/>
    </location>
    <ligand>
        <name>substrate</name>
    </ligand>
</feature>
<feature type="binding site" evidence="1">
    <location>
        <position position="170"/>
    </location>
    <ligand>
        <name>beta-D-fructose 1,6-bisphosphate</name>
        <dbReference type="ChEBI" id="CHEBI:32966"/>
        <note>allosteric activator</note>
    </ligand>
</feature>
<feature type="binding site" evidence="1">
    <location>
        <position position="185"/>
    </location>
    <ligand>
        <name>beta-D-fructose 1,6-bisphosphate</name>
        <dbReference type="ChEBI" id="CHEBI:32966"/>
        <note>allosteric activator</note>
    </ligand>
</feature>
<feature type="binding site" evidence="1">
    <location>
        <position position="247"/>
    </location>
    <ligand>
        <name>substrate</name>
    </ligand>
</feature>
<feature type="modified residue" description="Phosphotyrosine" evidence="1">
    <location>
        <position position="238"/>
    </location>
</feature>
<organism>
    <name type="scientific">Gloeobacter violaceus (strain ATCC 29082 / PCC 7421)</name>
    <dbReference type="NCBI Taxonomy" id="251221"/>
    <lineage>
        <taxon>Bacteria</taxon>
        <taxon>Bacillati</taxon>
        <taxon>Cyanobacteriota</taxon>
        <taxon>Cyanophyceae</taxon>
        <taxon>Gloeobacterales</taxon>
        <taxon>Gloeobacteraceae</taxon>
        <taxon>Gloeobacter</taxon>
    </lineage>
</organism>
<proteinExistence type="inferred from homology"/>
<reference key="1">
    <citation type="journal article" date="2003" name="DNA Res.">
        <title>Complete genome structure of Gloeobacter violaceus PCC 7421, a cyanobacterium that lacks thylakoids.</title>
        <authorList>
            <person name="Nakamura Y."/>
            <person name="Kaneko T."/>
            <person name="Sato S."/>
            <person name="Mimuro M."/>
            <person name="Miyashita H."/>
            <person name="Tsuchiya T."/>
            <person name="Sasamoto S."/>
            <person name="Watanabe A."/>
            <person name="Kawashima K."/>
            <person name="Kishida Y."/>
            <person name="Kiyokawa C."/>
            <person name="Kohara M."/>
            <person name="Matsumoto M."/>
            <person name="Matsuno A."/>
            <person name="Nakazaki N."/>
            <person name="Shimpo S."/>
            <person name="Takeuchi C."/>
            <person name="Yamada M."/>
            <person name="Tabata S."/>
        </authorList>
    </citation>
    <scope>NUCLEOTIDE SEQUENCE [LARGE SCALE GENOMIC DNA]</scope>
    <source>
        <strain>ATCC 29082 / PCC 7421</strain>
    </source>
</reference>
<sequence>MQDRLFVSMEHPRALPETDLIKGAIVGAGAVGMAIAYSMLIQNTFDELVLVDIDRRKVEGEVMDLVHGIPFVEPSVVRAGTLADCRGVDVVVITAGARQREGETRLSLVQRNVEIFRGLIGEIMEHCPNAILLVVSNPVDVMTYVAMKLAGLPPSRVIGSGTVLDTARFRYLLAERLRVDPRSLHAYIIGEHGDSEVPVWSRANVAGAFLSEIEPAVGTPDDPAKMFEVFEHVKNAAYEIIERKGATSWAIGLATTQIVRAITRNQNRVLPVSVLMSGLHGIEEVCLAYPAVLNRQGIDRLVKFSLSPGEEEQLQRSARVMRQTLDGIQF</sequence>
<protein>
    <recommendedName>
        <fullName evidence="1">L-lactate dehydrogenase</fullName>
        <shortName evidence="1">L-LDH</shortName>
        <ecNumber evidence="1">1.1.1.27</ecNumber>
    </recommendedName>
</protein>
<name>LDH_GLOVI</name>
<comment type="function">
    <text evidence="1">Catalyzes the conversion of lactate to pyruvate.</text>
</comment>
<comment type="catalytic activity">
    <reaction evidence="1">
        <text>(S)-lactate + NAD(+) = pyruvate + NADH + H(+)</text>
        <dbReference type="Rhea" id="RHEA:23444"/>
        <dbReference type="ChEBI" id="CHEBI:15361"/>
        <dbReference type="ChEBI" id="CHEBI:15378"/>
        <dbReference type="ChEBI" id="CHEBI:16651"/>
        <dbReference type="ChEBI" id="CHEBI:57540"/>
        <dbReference type="ChEBI" id="CHEBI:57945"/>
        <dbReference type="EC" id="1.1.1.27"/>
    </reaction>
</comment>
<comment type="activity regulation">
    <text evidence="1">Allosterically activated by fructose 1,6-bisphosphate (FBP).</text>
</comment>
<comment type="pathway">
    <text evidence="1">Fermentation; pyruvate fermentation to lactate; (S)-lactate from pyruvate: step 1/1.</text>
</comment>
<comment type="subunit">
    <text evidence="1">Homotetramer.</text>
</comment>
<comment type="subcellular location">
    <subcellularLocation>
        <location evidence="1">Cytoplasm</location>
    </subcellularLocation>
</comment>
<comment type="similarity">
    <text evidence="1">Belongs to the LDH/MDH superfamily. LDH family.</text>
</comment>